<comment type="similarity">
    <text evidence="1">Belongs to the eukaryotic ribosomal protein eL30 family.</text>
</comment>
<reference key="1">
    <citation type="journal article" date="2004" name="Nature">
        <title>Genome evolution in yeasts.</title>
        <authorList>
            <person name="Dujon B."/>
            <person name="Sherman D."/>
            <person name="Fischer G."/>
            <person name="Durrens P."/>
            <person name="Casaregola S."/>
            <person name="Lafontaine I."/>
            <person name="de Montigny J."/>
            <person name="Marck C."/>
            <person name="Neuveglise C."/>
            <person name="Talla E."/>
            <person name="Goffard N."/>
            <person name="Frangeul L."/>
            <person name="Aigle M."/>
            <person name="Anthouard V."/>
            <person name="Babour A."/>
            <person name="Barbe V."/>
            <person name="Barnay S."/>
            <person name="Blanchin S."/>
            <person name="Beckerich J.-M."/>
            <person name="Beyne E."/>
            <person name="Bleykasten C."/>
            <person name="Boisrame A."/>
            <person name="Boyer J."/>
            <person name="Cattolico L."/>
            <person name="Confanioleri F."/>
            <person name="de Daruvar A."/>
            <person name="Despons L."/>
            <person name="Fabre E."/>
            <person name="Fairhead C."/>
            <person name="Ferry-Dumazet H."/>
            <person name="Groppi A."/>
            <person name="Hantraye F."/>
            <person name="Hennequin C."/>
            <person name="Jauniaux N."/>
            <person name="Joyet P."/>
            <person name="Kachouri R."/>
            <person name="Kerrest A."/>
            <person name="Koszul R."/>
            <person name="Lemaire M."/>
            <person name="Lesur I."/>
            <person name="Ma L."/>
            <person name="Muller H."/>
            <person name="Nicaud J.-M."/>
            <person name="Nikolski M."/>
            <person name="Oztas S."/>
            <person name="Ozier-Kalogeropoulos O."/>
            <person name="Pellenz S."/>
            <person name="Potier S."/>
            <person name="Richard G.-F."/>
            <person name="Straub M.-L."/>
            <person name="Suleau A."/>
            <person name="Swennen D."/>
            <person name="Tekaia F."/>
            <person name="Wesolowski-Louvel M."/>
            <person name="Westhof E."/>
            <person name="Wirth B."/>
            <person name="Zeniou-Meyer M."/>
            <person name="Zivanovic Y."/>
            <person name="Bolotin-Fukuhara M."/>
            <person name="Thierry A."/>
            <person name="Bouchier C."/>
            <person name="Caudron B."/>
            <person name="Scarpelli C."/>
            <person name="Gaillardin C."/>
            <person name="Weissenbach J."/>
            <person name="Wincker P."/>
            <person name="Souciet J.-L."/>
        </authorList>
    </citation>
    <scope>NUCLEOTIDE SEQUENCE [LARGE SCALE GENOMIC DNA]</scope>
    <source>
        <strain>CLIB 122 / E 150</strain>
    </source>
</reference>
<proteinExistence type="inferred from homology"/>
<feature type="chain" id="PRO_0000146142" description="Large ribosomal subunit protein eL30">
    <location>
        <begin position="1"/>
        <end position="109"/>
    </location>
</feature>
<evidence type="ECO:0000305" key="1"/>
<name>RL30_YARLI</name>
<protein>
    <recommendedName>
        <fullName evidence="1">Large ribosomal subunit protein eL30</fullName>
    </recommendedName>
    <alternativeName>
        <fullName>60S ribosomal protein L30</fullName>
    </alternativeName>
</protein>
<organism>
    <name type="scientific">Yarrowia lipolytica (strain CLIB 122 / E 150)</name>
    <name type="common">Yeast</name>
    <name type="synonym">Candida lipolytica</name>
    <dbReference type="NCBI Taxonomy" id="284591"/>
    <lineage>
        <taxon>Eukaryota</taxon>
        <taxon>Fungi</taxon>
        <taxon>Dikarya</taxon>
        <taxon>Ascomycota</taxon>
        <taxon>Saccharomycotina</taxon>
        <taxon>Dipodascomycetes</taxon>
        <taxon>Dipodascales</taxon>
        <taxon>Dipodascales incertae sedis</taxon>
        <taxon>Yarrowia</taxon>
    </lineage>
</organism>
<keyword id="KW-1185">Reference proteome</keyword>
<keyword id="KW-0687">Ribonucleoprotein</keyword>
<keyword id="KW-0689">Ribosomal protein</keyword>
<sequence length="109" mass="11575">MTAPKSKKSGDNVNAKLGLAIKSGKYTLGYKSTIKALRQGKAKLVIIAGNTPALRKSEIEYYAMLAKCTVHHFQGGNNELGTSCGRLFRVGAVTIMDAGDSDILTAELS</sequence>
<gene>
    <name type="primary">RPL30</name>
    <name type="ordered locus">YALI0E23562g</name>
</gene>
<dbReference type="EMBL" id="CR382131">
    <property type="protein sequence ID" value="CAG79914.1"/>
    <property type="molecule type" value="Genomic_DNA"/>
</dbReference>
<dbReference type="RefSeq" id="XP_504315.1">
    <property type="nucleotide sequence ID" value="XM_504315.1"/>
</dbReference>
<dbReference type="SMR" id="Q6C4U7"/>
<dbReference type="FunCoup" id="Q6C4U7">
    <property type="interactions" value="1263"/>
</dbReference>
<dbReference type="STRING" id="284591.Q6C4U7"/>
<dbReference type="EnsemblFungi" id="CAG79914">
    <property type="protein sequence ID" value="CAG79914"/>
    <property type="gene ID" value="YALI0_E23562g"/>
</dbReference>
<dbReference type="VEuPathDB" id="FungiDB:YALI0_E23562g"/>
<dbReference type="HOGENOM" id="CLU_130502_0_1_1"/>
<dbReference type="InParanoid" id="Q6C4U7"/>
<dbReference type="OMA" id="YFQGGNN"/>
<dbReference type="OrthoDB" id="76069at4891"/>
<dbReference type="Proteomes" id="UP000001300">
    <property type="component" value="Chromosome E"/>
</dbReference>
<dbReference type="GO" id="GO:0022625">
    <property type="term" value="C:cytosolic large ribosomal subunit"/>
    <property type="evidence" value="ECO:0000318"/>
    <property type="project" value="GO_Central"/>
</dbReference>
<dbReference type="GO" id="GO:0030627">
    <property type="term" value="F:pre-mRNA 5'-splice site binding"/>
    <property type="evidence" value="ECO:0007669"/>
    <property type="project" value="EnsemblFungi"/>
</dbReference>
<dbReference type="GO" id="GO:0003723">
    <property type="term" value="F:RNA binding"/>
    <property type="evidence" value="ECO:0000318"/>
    <property type="project" value="GO_Central"/>
</dbReference>
<dbReference type="GO" id="GO:0003735">
    <property type="term" value="F:structural constituent of ribosome"/>
    <property type="evidence" value="ECO:0000318"/>
    <property type="project" value="GO_Central"/>
</dbReference>
<dbReference type="GO" id="GO:0048025">
    <property type="term" value="P:negative regulation of mRNA splicing, via spliceosome"/>
    <property type="evidence" value="ECO:0007669"/>
    <property type="project" value="EnsemblFungi"/>
</dbReference>
<dbReference type="GO" id="GO:0006364">
    <property type="term" value="P:rRNA processing"/>
    <property type="evidence" value="ECO:0007669"/>
    <property type="project" value="EnsemblFungi"/>
</dbReference>
<dbReference type="FunFam" id="3.30.1330.30:FF:000001">
    <property type="entry name" value="60S ribosomal protein L30"/>
    <property type="match status" value="1"/>
</dbReference>
<dbReference type="Gene3D" id="3.30.1330.30">
    <property type="match status" value="1"/>
</dbReference>
<dbReference type="InterPro" id="IPR039109">
    <property type="entry name" value="Ribosomal_eL30-like"/>
</dbReference>
<dbReference type="InterPro" id="IPR029064">
    <property type="entry name" value="Ribosomal_eL30-like_sf"/>
</dbReference>
<dbReference type="InterPro" id="IPR022991">
    <property type="entry name" value="Ribosomal_eL30_CS"/>
</dbReference>
<dbReference type="InterPro" id="IPR004038">
    <property type="entry name" value="Ribosomal_eL8/eL30/eS12/Gad45"/>
</dbReference>
<dbReference type="NCBIfam" id="NF002172">
    <property type="entry name" value="PRK01018.1"/>
    <property type="match status" value="1"/>
</dbReference>
<dbReference type="PANTHER" id="PTHR11449">
    <property type="entry name" value="RIBOSOMAL PROTEIN L30"/>
    <property type="match status" value="1"/>
</dbReference>
<dbReference type="Pfam" id="PF01248">
    <property type="entry name" value="Ribosomal_L7Ae"/>
    <property type="match status" value="1"/>
</dbReference>
<dbReference type="SUPFAM" id="SSF55315">
    <property type="entry name" value="L30e-like"/>
    <property type="match status" value="1"/>
</dbReference>
<dbReference type="PROSITE" id="PS00709">
    <property type="entry name" value="RIBOSOMAL_L30E_1"/>
    <property type="match status" value="1"/>
</dbReference>
<dbReference type="PROSITE" id="PS00993">
    <property type="entry name" value="RIBOSOMAL_L30E_2"/>
    <property type="match status" value="1"/>
</dbReference>
<accession>Q6C4U7</accession>